<organism>
    <name type="scientific">Shewanella oneidensis (strain ATCC 700550 / JCM 31522 / CIP 106686 / LMG 19005 / NCIMB 14063 / MR-1)</name>
    <dbReference type="NCBI Taxonomy" id="211586"/>
    <lineage>
        <taxon>Bacteria</taxon>
        <taxon>Pseudomonadati</taxon>
        <taxon>Pseudomonadota</taxon>
        <taxon>Gammaproteobacteria</taxon>
        <taxon>Alteromonadales</taxon>
        <taxon>Shewanellaceae</taxon>
        <taxon>Shewanella</taxon>
    </lineage>
</organism>
<keyword id="KW-0028">Amino-acid biosynthesis</keyword>
<keyword id="KW-0963">Cytoplasm</keyword>
<keyword id="KW-0554">One-carbon metabolism</keyword>
<keyword id="KW-0663">Pyridoxal phosphate</keyword>
<keyword id="KW-1185">Reference proteome</keyword>
<keyword id="KW-0808">Transferase</keyword>
<comment type="function">
    <text evidence="1">Catalyzes the reversible interconversion of serine and glycine with tetrahydrofolate (THF) serving as the one-carbon carrier. This reaction serves as the major source of one-carbon groups required for the biosynthesis of purines, thymidylate, methionine, and other important biomolecules. Also exhibits THF-independent aldolase activity toward beta-hydroxyamino acids, producing glycine and aldehydes, via a retro-aldol mechanism.</text>
</comment>
<comment type="catalytic activity">
    <reaction evidence="1">
        <text>(6R)-5,10-methylene-5,6,7,8-tetrahydrofolate + glycine + H2O = (6S)-5,6,7,8-tetrahydrofolate + L-serine</text>
        <dbReference type="Rhea" id="RHEA:15481"/>
        <dbReference type="ChEBI" id="CHEBI:15377"/>
        <dbReference type="ChEBI" id="CHEBI:15636"/>
        <dbReference type="ChEBI" id="CHEBI:33384"/>
        <dbReference type="ChEBI" id="CHEBI:57305"/>
        <dbReference type="ChEBI" id="CHEBI:57453"/>
        <dbReference type="EC" id="2.1.2.1"/>
    </reaction>
</comment>
<comment type="cofactor">
    <cofactor evidence="1">
        <name>pyridoxal 5'-phosphate</name>
        <dbReference type="ChEBI" id="CHEBI:597326"/>
    </cofactor>
</comment>
<comment type="pathway">
    <text evidence="1">One-carbon metabolism; tetrahydrofolate interconversion.</text>
</comment>
<comment type="pathway">
    <text evidence="1">Amino-acid biosynthesis; glycine biosynthesis; glycine from L-serine: step 1/1.</text>
</comment>
<comment type="subunit">
    <text evidence="1">Homodimer.</text>
</comment>
<comment type="subcellular location">
    <subcellularLocation>
        <location evidence="1">Cytoplasm</location>
    </subcellularLocation>
</comment>
<comment type="similarity">
    <text evidence="1">Belongs to the SHMT family.</text>
</comment>
<dbReference type="EC" id="2.1.2.1" evidence="1"/>
<dbReference type="EMBL" id="AE014299">
    <property type="protein sequence ID" value="AAN56464.1"/>
    <property type="molecule type" value="Genomic_DNA"/>
</dbReference>
<dbReference type="RefSeq" id="NP_719020.1">
    <property type="nucleotide sequence ID" value="NC_004347.2"/>
</dbReference>
<dbReference type="RefSeq" id="WP_011073318.1">
    <property type="nucleotide sequence ID" value="NC_004347.2"/>
</dbReference>
<dbReference type="SMR" id="Q8EBN8"/>
<dbReference type="STRING" id="211586.SO_3471"/>
<dbReference type="PaxDb" id="211586-SO_3471"/>
<dbReference type="KEGG" id="son:SO_3471"/>
<dbReference type="PATRIC" id="fig|211586.12.peg.3370"/>
<dbReference type="eggNOG" id="COG0112">
    <property type="taxonomic scope" value="Bacteria"/>
</dbReference>
<dbReference type="HOGENOM" id="CLU_022477_2_1_6"/>
<dbReference type="OrthoDB" id="9803846at2"/>
<dbReference type="PhylomeDB" id="Q8EBN8"/>
<dbReference type="BioCyc" id="SONE211586:G1GMP-3240-MONOMER"/>
<dbReference type="UniPathway" id="UPA00193"/>
<dbReference type="UniPathway" id="UPA00288">
    <property type="reaction ID" value="UER01023"/>
</dbReference>
<dbReference type="Proteomes" id="UP000008186">
    <property type="component" value="Chromosome"/>
</dbReference>
<dbReference type="GO" id="GO:0005737">
    <property type="term" value="C:cytoplasm"/>
    <property type="evidence" value="ECO:0000318"/>
    <property type="project" value="GO_Central"/>
</dbReference>
<dbReference type="GO" id="GO:0005829">
    <property type="term" value="C:cytosol"/>
    <property type="evidence" value="ECO:0000318"/>
    <property type="project" value="GO_Central"/>
</dbReference>
<dbReference type="GO" id="GO:0004372">
    <property type="term" value="F:glycine hydroxymethyltransferase activity"/>
    <property type="evidence" value="ECO:0000318"/>
    <property type="project" value="GO_Central"/>
</dbReference>
<dbReference type="GO" id="GO:0030170">
    <property type="term" value="F:pyridoxal phosphate binding"/>
    <property type="evidence" value="ECO:0000318"/>
    <property type="project" value="GO_Central"/>
</dbReference>
<dbReference type="GO" id="GO:0019264">
    <property type="term" value="P:glycine biosynthetic process from serine"/>
    <property type="evidence" value="ECO:0000318"/>
    <property type="project" value="GO_Central"/>
</dbReference>
<dbReference type="GO" id="GO:0035999">
    <property type="term" value="P:tetrahydrofolate interconversion"/>
    <property type="evidence" value="ECO:0007669"/>
    <property type="project" value="UniProtKB-UniRule"/>
</dbReference>
<dbReference type="GO" id="GO:0046653">
    <property type="term" value="P:tetrahydrofolate metabolic process"/>
    <property type="evidence" value="ECO:0000318"/>
    <property type="project" value="GO_Central"/>
</dbReference>
<dbReference type="CDD" id="cd00378">
    <property type="entry name" value="SHMT"/>
    <property type="match status" value="1"/>
</dbReference>
<dbReference type="FunFam" id="3.40.640.10:FF:000001">
    <property type="entry name" value="Serine hydroxymethyltransferase"/>
    <property type="match status" value="1"/>
</dbReference>
<dbReference type="FunFam" id="3.90.1150.10:FF:000003">
    <property type="entry name" value="Serine hydroxymethyltransferase"/>
    <property type="match status" value="1"/>
</dbReference>
<dbReference type="Gene3D" id="3.90.1150.10">
    <property type="entry name" value="Aspartate Aminotransferase, domain 1"/>
    <property type="match status" value="1"/>
</dbReference>
<dbReference type="Gene3D" id="3.40.640.10">
    <property type="entry name" value="Type I PLP-dependent aspartate aminotransferase-like (Major domain)"/>
    <property type="match status" value="1"/>
</dbReference>
<dbReference type="HAMAP" id="MF_00051">
    <property type="entry name" value="SHMT"/>
    <property type="match status" value="1"/>
</dbReference>
<dbReference type="InterPro" id="IPR015424">
    <property type="entry name" value="PyrdxlP-dep_Trfase"/>
</dbReference>
<dbReference type="InterPro" id="IPR015421">
    <property type="entry name" value="PyrdxlP-dep_Trfase_major"/>
</dbReference>
<dbReference type="InterPro" id="IPR015422">
    <property type="entry name" value="PyrdxlP-dep_Trfase_small"/>
</dbReference>
<dbReference type="InterPro" id="IPR001085">
    <property type="entry name" value="Ser_HO-MeTrfase"/>
</dbReference>
<dbReference type="InterPro" id="IPR049943">
    <property type="entry name" value="Ser_HO-MeTrfase-like"/>
</dbReference>
<dbReference type="InterPro" id="IPR019798">
    <property type="entry name" value="Ser_HO-MeTrfase_PLP_BS"/>
</dbReference>
<dbReference type="InterPro" id="IPR039429">
    <property type="entry name" value="SHMT-like_dom"/>
</dbReference>
<dbReference type="NCBIfam" id="NF000586">
    <property type="entry name" value="PRK00011.1"/>
    <property type="match status" value="1"/>
</dbReference>
<dbReference type="PANTHER" id="PTHR11680">
    <property type="entry name" value="SERINE HYDROXYMETHYLTRANSFERASE"/>
    <property type="match status" value="1"/>
</dbReference>
<dbReference type="PANTHER" id="PTHR11680:SF50">
    <property type="entry name" value="SERINE HYDROXYMETHYLTRANSFERASE"/>
    <property type="match status" value="1"/>
</dbReference>
<dbReference type="Pfam" id="PF00464">
    <property type="entry name" value="SHMT"/>
    <property type="match status" value="1"/>
</dbReference>
<dbReference type="PIRSF" id="PIRSF000412">
    <property type="entry name" value="SHMT"/>
    <property type="match status" value="1"/>
</dbReference>
<dbReference type="SUPFAM" id="SSF53383">
    <property type="entry name" value="PLP-dependent transferases"/>
    <property type="match status" value="1"/>
</dbReference>
<dbReference type="PROSITE" id="PS00096">
    <property type="entry name" value="SHMT"/>
    <property type="match status" value="1"/>
</dbReference>
<accession>Q8EBN8</accession>
<name>GLYA_SHEON</name>
<reference key="1">
    <citation type="journal article" date="2002" name="Nat. Biotechnol.">
        <title>Genome sequence of the dissimilatory metal ion-reducing bacterium Shewanella oneidensis.</title>
        <authorList>
            <person name="Heidelberg J.F."/>
            <person name="Paulsen I.T."/>
            <person name="Nelson K.E."/>
            <person name="Gaidos E.J."/>
            <person name="Nelson W.C."/>
            <person name="Read T.D."/>
            <person name="Eisen J.A."/>
            <person name="Seshadri R."/>
            <person name="Ward N.L."/>
            <person name="Methe B.A."/>
            <person name="Clayton R.A."/>
            <person name="Meyer T."/>
            <person name="Tsapin A."/>
            <person name="Scott J."/>
            <person name="Beanan M.J."/>
            <person name="Brinkac L.M."/>
            <person name="Daugherty S.C."/>
            <person name="DeBoy R.T."/>
            <person name="Dodson R.J."/>
            <person name="Durkin A.S."/>
            <person name="Haft D.H."/>
            <person name="Kolonay J.F."/>
            <person name="Madupu R."/>
            <person name="Peterson J.D."/>
            <person name="Umayam L.A."/>
            <person name="White O."/>
            <person name="Wolf A.M."/>
            <person name="Vamathevan J.J."/>
            <person name="Weidman J.F."/>
            <person name="Impraim M."/>
            <person name="Lee K."/>
            <person name="Berry K.J."/>
            <person name="Lee C."/>
            <person name="Mueller J."/>
            <person name="Khouri H.M."/>
            <person name="Gill J."/>
            <person name="Utterback T.R."/>
            <person name="McDonald L.A."/>
            <person name="Feldblyum T.V."/>
            <person name="Smith H.O."/>
            <person name="Venter J.C."/>
            <person name="Nealson K.H."/>
            <person name="Fraser C.M."/>
        </authorList>
    </citation>
    <scope>NUCLEOTIDE SEQUENCE [LARGE SCALE GENOMIC DNA]</scope>
    <source>
        <strain>ATCC 700550 / JCM 31522 / CIP 106686 / LMG 19005 / NCIMB 14063 / MR-1</strain>
    </source>
</reference>
<proteinExistence type="inferred from homology"/>
<sequence>MLKKDMNIADYDPELFNAIQNETLRQEEHIELIASENYTSPRVMQAQGSQLTNKYAEGYPGKRYYGGCEYVDVVETLAIERAKQLFGATYANVQPHSGSQANSAVYMALLKPGDTVLGMNLAHGGHLTHGSPVNFSGRLYNIIPYGIDESGKIDYDEMERLAVEHKPKMMIGGFSAYSGIVDWARMREIADKIGAYLFVDMAHVAGLIAAGVYPNPVPHAHVVTSTTHKTLAGPRGGIILSAADDEELYKKLNSAVFPGGQGGPLMHVIAGKAVAFKEALEPEFKTYQQQVVNNAKAMVEVFLERGYKIVSGGTSNHLMLVDLIGRDLTGKEADAALGSANITVNKNSVPNDPRSPFVTSGVRIGTPAITRRGFKEAEAKQLTGWICDILDDAHNPAVIERVKGQVLALCARFPVYG</sequence>
<evidence type="ECO:0000255" key="1">
    <source>
        <dbReference type="HAMAP-Rule" id="MF_00051"/>
    </source>
</evidence>
<protein>
    <recommendedName>
        <fullName evidence="1">Serine hydroxymethyltransferase</fullName>
        <shortName evidence="1">SHMT</shortName>
        <shortName evidence="1">Serine methylase</shortName>
        <ecNumber evidence="1">2.1.2.1</ecNumber>
    </recommendedName>
</protein>
<feature type="chain" id="PRO_0000113659" description="Serine hydroxymethyltransferase">
    <location>
        <begin position="1"/>
        <end position="417"/>
    </location>
</feature>
<feature type="binding site" evidence="1">
    <location>
        <position position="121"/>
    </location>
    <ligand>
        <name>(6S)-5,6,7,8-tetrahydrofolate</name>
        <dbReference type="ChEBI" id="CHEBI:57453"/>
    </ligand>
</feature>
<feature type="binding site" evidence="1">
    <location>
        <begin position="125"/>
        <end position="127"/>
    </location>
    <ligand>
        <name>(6S)-5,6,7,8-tetrahydrofolate</name>
        <dbReference type="ChEBI" id="CHEBI:57453"/>
    </ligand>
</feature>
<feature type="binding site" evidence="1">
    <location>
        <begin position="355"/>
        <end position="357"/>
    </location>
    <ligand>
        <name>(6S)-5,6,7,8-tetrahydrofolate</name>
        <dbReference type="ChEBI" id="CHEBI:57453"/>
    </ligand>
</feature>
<feature type="site" description="Plays an important role in substrate specificity" evidence="1">
    <location>
        <position position="228"/>
    </location>
</feature>
<feature type="modified residue" description="N6-(pyridoxal phosphate)lysine" evidence="1">
    <location>
        <position position="229"/>
    </location>
</feature>
<gene>
    <name evidence="1" type="primary">glyA</name>
    <name type="ordered locus">SO_3471</name>
</gene>